<dbReference type="EC" id="6.3.2.1" evidence="1"/>
<dbReference type="EMBL" id="CP000036">
    <property type="protein sequence ID" value="ABB64854.1"/>
    <property type="molecule type" value="Genomic_DNA"/>
</dbReference>
<dbReference type="RefSeq" id="WP_000905371.1">
    <property type="nucleotide sequence ID" value="NC_007613.1"/>
</dbReference>
<dbReference type="SMR" id="Q326A4"/>
<dbReference type="GeneID" id="93777303"/>
<dbReference type="KEGG" id="sbo:SBO_0122"/>
<dbReference type="HOGENOM" id="CLU_047148_0_0_6"/>
<dbReference type="UniPathway" id="UPA00028">
    <property type="reaction ID" value="UER00005"/>
</dbReference>
<dbReference type="Proteomes" id="UP000007067">
    <property type="component" value="Chromosome"/>
</dbReference>
<dbReference type="GO" id="GO:0005829">
    <property type="term" value="C:cytosol"/>
    <property type="evidence" value="ECO:0007669"/>
    <property type="project" value="TreeGrafter"/>
</dbReference>
<dbReference type="GO" id="GO:0005524">
    <property type="term" value="F:ATP binding"/>
    <property type="evidence" value="ECO:0007669"/>
    <property type="project" value="UniProtKB-KW"/>
</dbReference>
<dbReference type="GO" id="GO:0004592">
    <property type="term" value="F:pantoate-beta-alanine ligase activity"/>
    <property type="evidence" value="ECO:0007669"/>
    <property type="project" value="UniProtKB-UniRule"/>
</dbReference>
<dbReference type="GO" id="GO:0015940">
    <property type="term" value="P:pantothenate biosynthetic process"/>
    <property type="evidence" value="ECO:0007669"/>
    <property type="project" value="UniProtKB-UniRule"/>
</dbReference>
<dbReference type="CDD" id="cd00560">
    <property type="entry name" value="PanC"/>
    <property type="match status" value="1"/>
</dbReference>
<dbReference type="FunFam" id="3.30.1300.10:FF:000001">
    <property type="entry name" value="Pantothenate synthetase"/>
    <property type="match status" value="1"/>
</dbReference>
<dbReference type="FunFam" id="3.40.50.620:FF:000013">
    <property type="entry name" value="Pantothenate synthetase"/>
    <property type="match status" value="1"/>
</dbReference>
<dbReference type="Gene3D" id="3.40.50.620">
    <property type="entry name" value="HUPs"/>
    <property type="match status" value="1"/>
</dbReference>
<dbReference type="Gene3D" id="3.30.1300.10">
    <property type="entry name" value="Pantoate-beta-alanine ligase, C-terminal domain"/>
    <property type="match status" value="1"/>
</dbReference>
<dbReference type="HAMAP" id="MF_00158">
    <property type="entry name" value="PanC"/>
    <property type="match status" value="1"/>
</dbReference>
<dbReference type="InterPro" id="IPR004821">
    <property type="entry name" value="Cyt_trans-like"/>
</dbReference>
<dbReference type="InterPro" id="IPR003721">
    <property type="entry name" value="Pantoate_ligase"/>
</dbReference>
<dbReference type="InterPro" id="IPR042176">
    <property type="entry name" value="Pantoate_ligase_C"/>
</dbReference>
<dbReference type="InterPro" id="IPR014729">
    <property type="entry name" value="Rossmann-like_a/b/a_fold"/>
</dbReference>
<dbReference type="NCBIfam" id="TIGR00125">
    <property type="entry name" value="cyt_tran_rel"/>
    <property type="match status" value="1"/>
</dbReference>
<dbReference type="NCBIfam" id="TIGR00018">
    <property type="entry name" value="panC"/>
    <property type="match status" value="1"/>
</dbReference>
<dbReference type="PANTHER" id="PTHR21299">
    <property type="entry name" value="CYTIDYLATE KINASE/PANTOATE-BETA-ALANINE LIGASE"/>
    <property type="match status" value="1"/>
</dbReference>
<dbReference type="PANTHER" id="PTHR21299:SF1">
    <property type="entry name" value="PANTOATE--BETA-ALANINE LIGASE"/>
    <property type="match status" value="1"/>
</dbReference>
<dbReference type="Pfam" id="PF02569">
    <property type="entry name" value="Pantoate_ligase"/>
    <property type="match status" value="1"/>
</dbReference>
<dbReference type="SUPFAM" id="SSF52374">
    <property type="entry name" value="Nucleotidylyl transferase"/>
    <property type="match status" value="1"/>
</dbReference>
<proteinExistence type="inferred from homology"/>
<organism>
    <name type="scientific">Shigella boydii serotype 4 (strain Sb227)</name>
    <dbReference type="NCBI Taxonomy" id="300268"/>
    <lineage>
        <taxon>Bacteria</taxon>
        <taxon>Pseudomonadati</taxon>
        <taxon>Pseudomonadota</taxon>
        <taxon>Gammaproteobacteria</taxon>
        <taxon>Enterobacterales</taxon>
        <taxon>Enterobacteriaceae</taxon>
        <taxon>Shigella</taxon>
    </lineage>
</organism>
<feature type="chain" id="PRO_0000305551" description="Pantothenate synthetase">
    <location>
        <begin position="1"/>
        <end position="283"/>
    </location>
</feature>
<feature type="active site" description="Proton donor" evidence="1">
    <location>
        <position position="37"/>
    </location>
</feature>
<feature type="binding site" evidence="1">
    <location>
        <begin position="30"/>
        <end position="37"/>
    </location>
    <ligand>
        <name>ATP</name>
        <dbReference type="ChEBI" id="CHEBI:30616"/>
    </ligand>
</feature>
<feature type="binding site" evidence="1">
    <location>
        <position position="61"/>
    </location>
    <ligand>
        <name>(R)-pantoate</name>
        <dbReference type="ChEBI" id="CHEBI:15980"/>
    </ligand>
</feature>
<feature type="binding site" evidence="1">
    <location>
        <position position="61"/>
    </location>
    <ligand>
        <name>beta-alanine</name>
        <dbReference type="ChEBI" id="CHEBI:57966"/>
    </ligand>
</feature>
<feature type="binding site" evidence="1">
    <location>
        <begin position="149"/>
        <end position="152"/>
    </location>
    <ligand>
        <name>ATP</name>
        <dbReference type="ChEBI" id="CHEBI:30616"/>
    </ligand>
</feature>
<feature type="binding site" evidence="1">
    <location>
        <position position="155"/>
    </location>
    <ligand>
        <name>(R)-pantoate</name>
        <dbReference type="ChEBI" id="CHEBI:15980"/>
    </ligand>
</feature>
<feature type="binding site" evidence="1">
    <location>
        <begin position="186"/>
        <end position="189"/>
    </location>
    <ligand>
        <name>ATP</name>
        <dbReference type="ChEBI" id="CHEBI:30616"/>
    </ligand>
</feature>
<accession>Q326A4</accession>
<sequence>MLIIETLPLLRQQIRRLRMEGKRVALVPTMGNLHDGHMKLVDEAKARADVVVVSIFVNPMQFDRPEDLARYPRTLQEDCEKLNKRKVDLVFAPSVKEIYPNGTETHTYVDVPGLSTMLEGASRPGHFRGVSTIVSKLFNLVQPDIACFGEKDFQQLALIRKMVADMGFDIEIVGVPIMRAKDGLALSSRNGYLTAEQRKIAPGLYKVLSSIADKLQAGERDLDEIIAIAGQELNEKGFRADDIQIRDADTLLEVSETSKRAVILVAAWLGDARLIDNKIVELA</sequence>
<protein>
    <recommendedName>
        <fullName evidence="1">Pantothenate synthetase</fullName>
        <shortName evidence="1">PS</shortName>
        <ecNumber evidence="1">6.3.2.1</ecNumber>
    </recommendedName>
    <alternativeName>
        <fullName evidence="1">Pantoate--beta-alanine ligase</fullName>
    </alternativeName>
    <alternativeName>
        <fullName evidence="1">Pantoate-activating enzyme</fullName>
    </alternativeName>
</protein>
<reference key="1">
    <citation type="journal article" date="2005" name="Nucleic Acids Res.">
        <title>Genome dynamics and diversity of Shigella species, the etiologic agents of bacillary dysentery.</title>
        <authorList>
            <person name="Yang F."/>
            <person name="Yang J."/>
            <person name="Zhang X."/>
            <person name="Chen L."/>
            <person name="Jiang Y."/>
            <person name="Yan Y."/>
            <person name="Tang X."/>
            <person name="Wang J."/>
            <person name="Xiong Z."/>
            <person name="Dong J."/>
            <person name="Xue Y."/>
            <person name="Zhu Y."/>
            <person name="Xu X."/>
            <person name="Sun L."/>
            <person name="Chen S."/>
            <person name="Nie H."/>
            <person name="Peng J."/>
            <person name="Xu J."/>
            <person name="Wang Y."/>
            <person name="Yuan Z."/>
            <person name="Wen Y."/>
            <person name="Yao Z."/>
            <person name="Shen Y."/>
            <person name="Qiang B."/>
            <person name="Hou Y."/>
            <person name="Yu J."/>
            <person name="Jin Q."/>
        </authorList>
    </citation>
    <scope>NUCLEOTIDE SEQUENCE [LARGE SCALE GENOMIC DNA]</scope>
    <source>
        <strain>Sb227</strain>
    </source>
</reference>
<evidence type="ECO:0000255" key="1">
    <source>
        <dbReference type="HAMAP-Rule" id="MF_00158"/>
    </source>
</evidence>
<name>PANC_SHIBS</name>
<gene>
    <name evidence="1" type="primary">panC</name>
    <name type="ordered locus">SBO_0122</name>
</gene>
<keyword id="KW-0067">ATP-binding</keyword>
<keyword id="KW-0963">Cytoplasm</keyword>
<keyword id="KW-0436">Ligase</keyword>
<keyword id="KW-0547">Nucleotide-binding</keyword>
<keyword id="KW-0566">Pantothenate biosynthesis</keyword>
<comment type="function">
    <text evidence="1">Catalyzes the condensation of pantoate with beta-alanine in an ATP-dependent reaction via a pantoyl-adenylate intermediate.</text>
</comment>
<comment type="catalytic activity">
    <reaction evidence="1">
        <text>(R)-pantoate + beta-alanine + ATP = (R)-pantothenate + AMP + diphosphate + H(+)</text>
        <dbReference type="Rhea" id="RHEA:10912"/>
        <dbReference type="ChEBI" id="CHEBI:15378"/>
        <dbReference type="ChEBI" id="CHEBI:15980"/>
        <dbReference type="ChEBI" id="CHEBI:29032"/>
        <dbReference type="ChEBI" id="CHEBI:30616"/>
        <dbReference type="ChEBI" id="CHEBI:33019"/>
        <dbReference type="ChEBI" id="CHEBI:57966"/>
        <dbReference type="ChEBI" id="CHEBI:456215"/>
        <dbReference type="EC" id="6.3.2.1"/>
    </reaction>
</comment>
<comment type="pathway">
    <text evidence="1">Cofactor biosynthesis; (R)-pantothenate biosynthesis; (R)-pantothenate from (R)-pantoate and beta-alanine: step 1/1.</text>
</comment>
<comment type="subunit">
    <text evidence="1">Homodimer.</text>
</comment>
<comment type="subcellular location">
    <subcellularLocation>
        <location evidence="1">Cytoplasm</location>
    </subcellularLocation>
</comment>
<comment type="miscellaneous">
    <text evidence="1">The reaction proceeds by a bi uni uni bi ping pong mechanism.</text>
</comment>
<comment type="similarity">
    <text evidence="1">Belongs to the pantothenate synthetase family.</text>
</comment>